<organism>
    <name type="scientific">Saccharomyces cerevisiae (strain ATCC 204508 / S288c)</name>
    <name type="common">Baker's yeast</name>
    <dbReference type="NCBI Taxonomy" id="559292"/>
    <lineage>
        <taxon>Eukaryota</taxon>
        <taxon>Fungi</taxon>
        <taxon>Dikarya</taxon>
        <taxon>Ascomycota</taxon>
        <taxon>Saccharomycotina</taxon>
        <taxon>Saccharomycetes</taxon>
        <taxon>Saccharomycetales</taxon>
        <taxon>Saccharomycetaceae</taxon>
        <taxon>Saccharomyces</taxon>
    </lineage>
</organism>
<keyword id="KW-0012">Acyltransferase</keyword>
<keyword id="KW-0256">Endoplasmic reticulum</keyword>
<keyword id="KW-1185">Reference proteome</keyword>
<keyword id="KW-0808">Transferase</keyword>
<sequence>MNLKLSAIESYFFHRSRLNLHSCFYVGIKLNELPKKSQLIAALKYTVIQHERLTCNVFYDELKKENFLQNILEPLKFCDLVEYRHDWDQLGETEINHIFQRYNFSYNENKPLWKILILPNQNQMLLLTDHVLMDGMSAIHVWETFMEGLQMQQPVEIDETIYSPSLNSSTEKIMSAPLYGDWPIPWNWHIVRQLVSRLHYWFPQTVVKNNRNLIQFANYSFPKDLLDDKPSDGTQKYKVKNTNHQWEFRLSPTHLNDILQECKANNTSLTSLLGALVCTSFEKIAAHEYTGSFLKIELPMNIRKPFERVLKLPSDDKLAVGNFIAVIEFNHKLHQNRGIWDIASQIQRAIRSSSEDKIIDKVNEVKLLEVISSQQYIEDKISLNNGPSSTFEVTNLGFQTFKDACNTSLPFYIVDATFNEPQGISSIFSLSVISTPGNGLHCCISYPNTLTKVLEPHWQYMKDYLNLY</sequence>
<name>SLI1_YEAST</name>
<feature type="chain" id="PRO_0000202846" description="N-acetyltransferase SLI1">
    <location>
        <begin position="1"/>
        <end position="468"/>
    </location>
</feature>
<accession>P53304</accession>
<accession>D6VUZ5</accession>
<reference key="1">
    <citation type="journal article" date="1997" name="Yeast">
        <title>Sequence analysis of 203 kilobases from Saccharomyces cerevisiae chromosome VII.</title>
        <authorList>
            <person name="Rieger M."/>
            <person name="Brueckner M."/>
            <person name="Schaefer M."/>
            <person name="Mueller-Auer S."/>
        </authorList>
    </citation>
    <scope>NUCLEOTIDE SEQUENCE [GENOMIC DNA]</scope>
    <source>
        <strain>ATCC 204508 / S288c</strain>
    </source>
</reference>
<reference key="2">
    <citation type="journal article" date="1997" name="Nature">
        <title>The nucleotide sequence of Saccharomyces cerevisiae chromosome VII.</title>
        <authorList>
            <person name="Tettelin H."/>
            <person name="Agostoni-Carbone M.L."/>
            <person name="Albermann K."/>
            <person name="Albers M."/>
            <person name="Arroyo J."/>
            <person name="Backes U."/>
            <person name="Barreiros T."/>
            <person name="Bertani I."/>
            <person name="Bjourson A.J."/>
            <person name="Brueckner M."/>
            <person name="Bruschi C.V."/>
            <person name="Carignani G."/>
            <person name="Castagnoli L."/>
            <person name="Cerdan E."/>
            <person name="Clemente M.L."/>
            <person name="Coblenz A."/>
            <person name="Coglievina M."/>
            <person name="Coissac E."/>
            <person name="Defoor E."/>
            <person name="Del Bino S."/>
            <person name="Delius H."/>
            <person name="Delneri D."/>
            <person name="de Wergifosse P."/>
            <person name="Dujon B."/>
            <person name="Durand P."/>
            <person name="Entian K.-D."/>
            <person name="Eraso P."/>
            <person name="Escribano V."/>
            <person name="Fabiani L."/>
            <person name="Fartmann B."/>
            <person name="Feroli F."/>
            <person name="Feuermann M."/>
            <person name="Frontali L."/>
            <person name="Garcia-Gonzalez M."/>
            <person name="Garcia-Saez M.I."/>
            <person name="Goffeau A."/>
            <person name="Guerreiro P."/>
            <person name="Hani J."/>
            <person name="Hansen M."/>
            <person name="Hebling U."/>
            <person name="Hernandez K."/>
            <person name="Heumann K."/>
            <person name="Hilger F."/>
            <person name="Hofmann B."/>
            <person name="Indge K.J."/>
            <person name="James C.M."/>
            <person name="Klima R."/>
            <person name="Koetter P."/>
            <person name="Kramer B."/>
            <person name="Kramer W."/>
            <person name="Lauquin G."/>
            <person name="Leuther H."/>
            <person name="Louis E.J."/>
            <person name="Maillier E."/>
            <person name="Marconi A."/>
            <person name="Martegani E."/>
            <person name="Mazon M.J."/>
            <person name="Mazzoni C."/>
            <person name="McReynolds A.D.K."/>
            <person name="Melchioretto P."/>
            <person name="Mewes H.-W."/>
            <person name="Minenkova O."/>
            <person name="Mueller-Auer S."/>
            <person name="Nawrocki A."/>
            <person name="Netter P."/>
            <person name="Neu R."/>
            <person name="Nombela C."/>
            <person name="Oliver S.G."/>
            <person name="Panzeri L."/>
            <person name="Paoluzi S."/>
            <person name="Plevani P."/>
            <person name="Portetelle D."/>
            <person name="Portillo F."/>
            <person name="Potier S."/>
            <person name="Purnelle B."/>
            <person name="Rieger M."/>
            <person name="Riles L."/>
            <person name="Rinaldi T."/>
            <person name="Robben J."/>
            <person name="Rodrigues-Pousada C."/>
            <person name="Rodriguez-Belmonte E."/>
            <person name="Rodriguez-Torres A.M."/>
            <person name="Rose M."/>
            <person name="Ruzzi M."/>
            <person name="Saliola M."/>
            <person name="Sanchez-Perez M."/>
            <person name="Schaefer B."/>
            <person name="Schaefer M."/>
            <person name="Scharfe M."/>
            <person name="Schmidheini T."/>
            <person name="Schreer A."/>
            <person name="Skala J."/>
            <person name="Souciet J.-L."/>
            <person name="Steensma H.Y."/>
            <person name="Talla E."/>
            <person name="Thierry A."/>
            <person name="Vandenbol M."/>
            <person name="van der Aart Q.J.M."/>
            <person name="Van Dyck L."/>
            <person name="Vanoni M."/>
            <person name="Verhasselt P."/>
            <person name="Voet M."/>
            <person name="Volckaert G."/>
            <person name="Wambutt R."/>
            <person name="Watson M.D."/>
            <person name="Weber N."/>
            <person name="Wedler E."/>
            <person name="Wedler H."/>
            <person name="Wipfli P."/>
            <person name="Wolf K."/>
            <person name="Wright L.F."/>
            <person name="Zaccaria P."/>
            <person name="Zimmermann M."/>
            <person name="Zollner A."/>
            <person name="Kleine K."/>
        </authorList>
    </citation>
    <scope>NUCLEOTIDE SEQUENCE [LARGE SCALE GENOMIC DNA]</scope>
    <source>
        <strain>ATCC 204508 / S288c</strain>
    </source>
</reference>
<reference key="3">
    <citation type="journal article" date="2014" name="G3 (Bethesda)">
        <title>The reference genome sequence of Saccharomyces cerevisiae: Then and now.</title>
        <authorList>
            <person name="Engel S.R."/>
            <person name="Dietrich F.S."/>
            <person name="Fisk D.G."/>
            <person name="Binkley G."/>
            <person name="Balakrishnan R."/>
            <person name="Costanzo M.C."/>
            <person name="Dwight S.S."/>
            <person name="Hitz B.C."/>
            <person name="Karra K."/>
            <person name="Nash R.S."/>
            <person name="Weng S."/>
            <person name="Wong E.D."/>
            <person name="Lloyd P."/>
            <person name="Skrzypek M.S."/>
            <person name="Miyasato S.R."/>
            <person name="Simison M."/>
            <person name="Cherry J.M."/>
        </authorList>
    </citation>
    <scope>GENOME REANNOTATION</scope>
    <source>
        <strain>ATCC 204508 / S288c</strain>
    </source>
</reference>
<reference key="4">
    <citation type="journal article" date="2004" name="Biochem. J.">
        <title>SLI1 (YGR212W) is a major gene conferring resistance to the sphingolipid biosynthesis inhibitor ISP-1, and encodes an ISP-1 N-acetyltransferase in yeast.</title>
        <authorList>
            <person name="Momoi M."/>
            <person name="Tanoue D."/>
            <person name="Sun Y."/>
            <person name="Takematsu H."/>
            <person name="Suzuki Y."/>
            <person name="Suzuki M."/>
            <person name="Suzuki A."/>
            <person name="Fujita T."/>
            <person name="Kozutsumi Y."/>
        </authorList>
    </citation>
    <scope>FUNCTION</scope>
    <scope>SUBCELLULAR LOCATION</scope>
</reference>
<gene>
    <name type="primary">SLI1</name>
    <name type="ordered locus">YGR212W</name>
</gene>
<evidence type="ECO:0000269" key="1">
    <source>
    </source>
</evidence>
<proteinExistence type="predicted"/>
<dbReference type="EC" id="2.3.1.-"/>
<dbReference type="EMBL" id="Z72997">
    <property type="protein sequence ID" value="CAA97239.1"/>
    <property type="molecule type" value="Genomic_DNA"/>
</dbReference>
<dbReference type="EMBL" id="BK006941">
    <property type="protein sequence ID" value="DAA08306.1"/>
    <property type="molecule type" value="Genomic_DNA"/>
</dbReference>
<dbReference type="PIR" id="S64535">
    <property type="entry name" value="S64535"/>
</dbReference>
<dbReference type="RefSeq" id="NP_011728.3">
    <property type="nucleotide sequence ID" value="NM_001181341.3"/>
</dbReference>
<dbReference type="BioGRID" id="33465">
    <property type="interactions" value="56"/>
</dbReference>
<dbReference type="FunCoup" id="P53304">
    <property type="interactions" value="24"/>
</dbReference>
<dbReference type="IntAct" id="P53304">
    <property type="interactions" value="1"/>
</dbReference>
<dbReference type="STRING" id="4932.YGR212W"/>
<dbReference type="iPTMnet" id="P53304"/>
<dbReference type="PaxDb" id="4932-YGR212W"/>
<dbReference type="PeptideAtlas" id="P53304"/>
<dbReference type="EnsemblFungi" id="YGR212W_mRNA">
    <property type="protein sequence ID" value="YGR212W"/>
    <property type="gene ID" value="YGR212W"/>
</dbReference>
<dbReference type="GeneID" id="853126"/>
<dbReference type="KEGG" id="sce:YGR212W"/>
<dbReference type="AGR" id="SGD:S000003444"/>
<dbReference type="SGD" id="S000003444">
    <property type="gene designation" value="SLI1"/>
</dbReference>
<dbReference type="VEuPathDB" id="FungiDB:YGR212W"/>
<dbReference type="eggNOG" id="ENOG502RC91">
    <property type="taxonomic scope" value="Eukaryota"/>
</dbReference>
<dbReference type="HOGENOM" id="CLU_599872_0_0_1"/>
<dbReference type="InParanoid" id="P53304"/>
<dbReference type="OMA" id="TEINHIF"/>
<dbReference type="OrthoDB" id="2150604at2759"/>
<dbReference type="BioCyc" id="YEAST:G3O-30894-MONOMER"/>
<dbReference type="BioGRID-ORCS" id="853126">
    <property type="hits" value="0 hits in 10 CRISPR screens"/>
</dbReference>
<dbReference type="PRO" id="PR:P53304"/>
<dbReference type="Proteomes" id="UP000002311">
    <property type="component" value="Chromosome VII"/>
</dbReference>
<dbReference type="RNAct" id="P53304">
    <property type="molecule type" value="protein"/>
</dbReference>
<dbReference type="GO" id="GO:0005783">
    <property type="term" value="C:endoplasmic reticulum"/>
    <property type="evidence" value="ECO:0007669"/>
    <property type="project" value="UniProtKB-SubCell"/>
</dbReference>
<dbReference type="GO" id="GO:0005635">
    <property type="term" value="C:nuclear envelope"/>
    <property type="evidence" value="ECO:0000314"/>
    <property type="project" value="SGD"/>
</dbReference>
<dbReference type="GO" id="GO:0005886">
    <property type="term" value="C:plasma membrane"/>
    <property type="evidence" value="ECO:0000314"/>
    <property type="project" value="SGD"/>
</dbReference>
<dbReference type="GO" id="GO:0008080">
    <property type="term" value="F:N-acetyltransferase activity"/>
    <property type="evidence" value="ECO:0000314"/>
    <property type="project" value="SGD"/>
</dbReference>
<dbReference type="GO" id="GO:0009410">
    <property type="term" value="P:response to xenobiotic stimulus"/>
    <property type="evidence" value="ECO:0000314"/>
    <property type="project" value="SGD"/>
</dbReference>
<dbReference type="InterPro" id="IPR052058">
    <property type="entry name" value="Alcohol_O-acetyltransferase"/>
</dbReference>
<dbReference type="InterPro" id="IPR010828">
    <property type="entry name" value="Atf2/Sli1-like"/>
</dbReference>
<dbReference type="PANTHER" id="PTHR28037">
    <property type="entry name" value="ALCOHOL O-ACETYLTRANSFERASE 1-RELATED"/>
    <property type="match status" value="1"/>
</dbReference>
<dbReference type="PANTHER" id="PTHR28037:SF1">
    <property type="entry name" value="ALCOHOL O-ACETYLTRANSFERASE 1-RELATED"/>
    <property type="match status" value="1"/>
</dbReference>
<dbReference type="Pfam" id="PF07247">
    <property type="entry name" value="AATase"/>
    <property type="match status" value="1"/>
</dbReference>
<dbReference type="SUPFAM" id="SSF52777">
    <property type="entry name" value="CoA-dependent acyltransferases"/>
    <property type="match status" value="2"/>
</dbReference>
<protein>
    <recommendedName>
        <fullName>N-acetyltransferase SLI1</fullName>
        <ecNumber>2.3.1.-</ecNumber>
    </recommendedName>
    <alternativeName>
        <fullName>Sphingosine-like immunosuppressant resistant protein 1</fullName>
    </alternativeName>
</protein>
<comment type="function">
    <text evidence="1">Confers resistance to the sphingolipid biosynthesis inhibitor drug myriocin (ISP-1). Inactivates ISP-1 by converting it into N-acetyl-myriocin. Cooperates with YPK1 in mediating resistance to myriocin.</text>
</comment>
<comment type="subcellular location">
    <subcellularLocation>
        <location evidence="1">Endoplasmic reticulum</location>
    </subcellularLocation>
</comment>